<sequence>MIKVKKKFGQNFLQDENIKNQIIQAIPNDVKRIVEIGPGLGDLTQKLVKLDSMIDCFEIDSELYTILLDKFRSELDSGKLNIINSDALNAWDKLSASEYFLVANLPYYVATNMILKAIDDKNCKGLVVMIQREVAIKFSSEAGDKEFSSLAILTWLKGKCELLFDVPSSAFNPPPKVISSVIRIIKDRDLSLNLKYDNFKNFLRVAFSAPRKTLLKNLSNLVQRDRLEIFFNTENLSHTIRPHELSVALYLKLFKEAENERRKQNPCG</sequence>
<gene>
    <name evidence="1" type="primary">rsmA</name>
    <name evidence="1" type="synonym">ksgA</name>
    <name type="ordered locus">CFF8240_1812</name>
</gene>
<keyword id="KW-0963">Cytoplasm</keyword>
<keyword id="KW-0489">Methyltransferase</keyword>
<keyword id="KW-0694">RNA-binding</keyword>
<keyword id="KW-0698">rRNA processing</keyword>
<keyword id="KW-0949">S-adenosyl-L-methionine</keyword>
<keyword id="KW-0808">Transferase</keyword>
<organism>
    <name type="scientific">Campylobacter fetus subsp. fetus (strain 82-40)</name>
    <dbReference type="NCBI Taxonomy" id="360106"/>
    <lineage>
        <taxon>Bacteria</taxon>
        <taxon>Pseudomonadati</taxon>
        <taxon>Campylobacterota</taxon>
        <taxon>Epsilonproteobacteria</taxon>
        <taxon>Campylobacterales</taxon>
        <taxon>Campylobacteraceae</taxon>
        <taxon>Campylobacter</taxon>
    </lineage>
</organism>
<proteinExistence type="inferred from homology"/>
<evidence type="ECO:0000255" key="1">
    <source>
        <dbReference type="HAMAP-Rule" id="MF_00607"/>
    </source>
</evidence>
<name>RSMA_CAMFF</name>
<dbReference type="EC" id="2.1.1.182" evidence="1"/>
<dbReference type="EMBL" id="CP000487">
    <property type="protein sequence ID" value="ABK83231.1"/>
    <property type="molecule type" value="Genomic_DNA"/>
</dbReference>
<dbReference type="RefSeq" id="WP_002847881.1">
    <property type="nucleotide sequence ID" value="NC_008599.1"/>
</dbReference>
<dbReference type="SMR" id="A0RRT6"/>
<dbReference type="GeneID" id="61065621"/>
<dbReference type="KEGG" id="cff:CFF8240_1812"/>
<dbReference type="eggNOG" id="COG0030">
    <property type="taxonomic scope" value="Bacteria"/>
</dbReference>
<dbReference type="HOGENOM" id="CLU_041220_0_2_7"/>
<dbReference type="Proteomes" id="UP000000760">
    <property type="component" value="Chromosome"/>
</dbReference>
<dbReference type="GO" id="GO:0005829">
    <property type="term" value="C:cytosol"/>
    <property type="evidence" value="ECO:0007669"/>
    <property type="project" value="TreeGrafter"/>
</dbReference>
<dbReference type="GO" id="GO:0052908">
    <property type="term" value="F:16S rRNA (adenine(1518)-N(6)/adenine(1519)-N(6))-dimethyltransferase activity"/>
    <property type="evidence" value="ECO:0007669"/>
    <property type="project" value="UniProtKB-EC"/>
</dbReference>
<dbReference type="GO" id="GO:0003723">
    <property type="term" value="F:RNA binding"/>
    <property type="evidence" value="ECO:0007669"/>
    <property type="project" value="UniProtKB-KW"/>
</dbReference>
<dbReference type="Gene3D" id="1.10.8.100">
    <property type="entry name" value="Ribosomal RNA adenine dimethylase-like, domain 2"/>
    <property type="match status" value="1"/>
</dbReference>
<dbReference type="Gene3D" id="3.40.50.150">
    <property type="entry name" value="Vaccinia Virus protein VP39"/>
    <property type="match status" value="1"/>
</dbReference>
<dbReference type="HAMAP" id="MF_00607">
    <property type="entry name" value="16SrRNA_methyltr_A"/>
    <property type="match status" value="1"/>
</dbReference>
<dbReference type="InterPro" id="IPR001737">
    <property type="entry name" value="KsgA/Erm"/>
</dbReference>
<dbReference type="InterPro" id="IPR023165">
    <property type="entry name" value="rRNA_Ade_diMease-like_C"/>
</dbReference>
<dbReference type="InterPro" id="IPR020596">
    <property type="entry name" value="rRNA_Ade_Mease_Trfase_CS"/>
</dbReference>
<dbReference type="InterPro" id="IPR020598">
    <property type="entry name" value="rRNA_Ade_methylase_Trfase_N"/>
</dbReference>
<dbReference type="InterPro" id="IPR011530">
    <property type="entry name" value="rRNA_adenine_dimethylase"/>
</dbReference>
<dbReference type="InterPro" id="IPR029063">
    <property type="entry name" value="SAM-dependent_MTases_sf"/>
</dbReference>
<dbReference type="NCBIfam" id="TIGR00755">
    <property type="entry name" value="ksgA"/>
    <property type="match status" value="1"/>
</dbReference>
<dbReference type="PANTHER" id="PTHR11727">
    <property type="entry name" value="DIMETHYLADENOSINE TRANSFERASE"/>
    <property type="match status" value="1"/>
</dbReference>
<dbReference type="PANTHER" id="PTHR11727:SF7">
    <property type="entry name" value="DIMETHYLADENOSINE TRANSFERASE-RELATED"/>
    <property type="match status" value="1"/>
</dbReference>
<dbReference type="Pfam" id="PF00398">
    <property type="entry name" value="RrnaAD"/>
    <property type="match status" value="1"/>
</dbReference>
<dbReference type="SMART" id="SM00650">
    <property type="entry name" value="rADc"/>
    <property type="match status" value="1"/>
</dbReference>
<dbReference type="SUPFAM" id="SSF53335">
    <property type="entry name" value="S-adenosyl-L-methionine-dependent methyltransferases"/>
    <property type="match status" value="1"/>
</dbReference>
<dbReference type="PROSITE" id="PS01131">
    <property type="entry name" value="RRNA_A_DIMETH"/>
    <property type="match status" value="1"/>
</dbReference>
<dbReference type="PROSITE" id="PS51689">
    <property type="entry name" value="SAM_RNA_A_N6_MT"/>
    <property type="match status" value="1"/>
</dbReference>
<protein>
    <recommendedName>
        <fullName evidence="1">Ribosomal RNA small subunit methyltransferase A</fullName>
        <ecNumber evidence="1">2.1.1.182</ecNumber>
    </recommendedName>
    <alternativeName>
        <fullName evidence="1">16S rRNA (adenine(1518)-N(6)/adenine(1519)-N(6))-dimethyltransferase</fullName>
    </alternativeName>
    <alternativeName>
        <fullName evidence="1">16S rRNA dimethyladenosine transferase</fullName>
    </alternativeName>
    <alternativeName>
        <fullName evidence="1">16S rRNA dimethylase</fullName>
    </alternativeName>
    <alternativeName>
        <fullName evidence="1">S-adenosylmethionine-6-N', N'-adenosyl(rRNA) dimethyltransferase</fullName>
    </alternativeName>
</protein>
<reference key="1">
    <citation type="submission" date="2006-11" db="EMBL/GenBank/DDBJ databases">
        <title>Sequence of Campylobacter fetus subsp. fetus 82-40.</title>
        <authorList>
            <person name="Fouts D.E."/>
            <person name="Nelson K.E."/>
        </authorList>
    </citation>
    <scope>NUCLEOTIDE SEQUENCE [LARGE SCALE GENOMIC DNA]</scope>
    <source>
        <strain>82-40</strain>
    </source>
</reference>
<feature type="chain" id="PRO_1000072648" description="Ribosomal RNA small subunit methyltransferase A">
    <location>
        <begin position="1"/>
        <end position="268"/>
    </location>
</feature>
<feature type="binding site" evidence="1">
    <location>
        <position position="11"/>
    </location>
    <ligand>
        <name>S-adenosyl-L-methionine</name>
        <dbReference type="ChEBI" id="CHEBI:59789"/>
    </ligand>
</feature>
<feature type="binding site" evidence="1">
    <location>
        <position position="13"/>
    </location>
    <ligand>
        <name>S-adenosyl-L-methionine</name>
        <dbReference type="ChEBI" id="CHEBI:59789"/>
    </ligand>
</feature>
<feature type="binding site" evidence="1">
    <location>
        <position position="37"/>
    </location>
    <ligand>
        <name>S-adenosyl-L-methionine</name>
        <dbReference type="ChEBI" id="CHEBI:59789"/>
    </ligand>
</feature>
<feature type="binding site" evidence="1">
    <location>
        <position position="58"/>
    </location>
    <ligand>
        <name>S-adenosyl-L-methionine</name>
        <dbReference type="ChEBI" id="CHEBI:59789"/>
    </ligand>
</feature>
<feature type="binding site" evidence="1">
    <location>
        <position position="86"/>
    </location>
    <ligand>
        <name>S-adenosyl-L-methionine</name>
        <dbReference type="ChEBI" id="CHEBI:59789"/>
    </ligand>
</feature>
<feature type="binding site" evidence="1">
    <location>
        <position position="104"/>
    </location>
    <ligand>
        <name>S-adenosyl-L-methionine</name>
        <dbReference type="ChEBI" id="CHEBI:59789"/>
    </ligand>
</feature>
<accession>A0RRT6</accession>
<comment type="function">
    <text evidence="1">Specifically dimethylates two adjacent adenosines (A1518 and A1519) in the loop of a conserved hairpin near the 3'-end of 16S rRNA in the 30S particle. May play a critical role in biogenesis of 30S subunits.</text>
</comment>
<comment type="catalytic activity">
    <reaction evidence="1">
        <text>adenosine(1518)/adenosine(1519) in 16S rRNA + 4 S-adenosyl-L-methionine = N(6)-dimethyladenosine(1518)/N(6)-dimethyladenosine(1519) in 16S rRNA + 4 S-adenosyl-L-homocysteine + 4 H(+)</text>
        <dbReference type="Rhea" id="RHEA:19609"/>
        <dbReference type="Rhea" id="RHEA-COMP:10232"/>
        <dbReference type="Rhea" id="RHEA-COMP:10233"/>
        <dbReference type="ChEBI" id="CHEBI:15378"/>
        <dbReference type="ChEBI" id="CHEBI:57856"/>
        <dbReference type="ChEBI" id="CHEBI:59789"/>
        <dbReference type="ChEBI" id="CHEBI:74411"/>
        <dbReference type="ChEBI" id="CHEBI:74493"/>
        <dbReference type="EC" id="2.1.1.182"/>
    </reaction>
</comment>
<comment type="subcellular location">
    <subcellularLocation>
        <location evidence="1">Cytoplasm</location>
    </subcellularLocation>
</comment>
<comment type="similarity">
    <text evidence="1">Belongs to the class I-like SAM-binding methyltransferase superfamily. rRNA adenine N(6)-methyltransferase family. RsmA subfamily.</text>
</comment>